<gene>
    <name evidence="1" type="primary">ccmE</name>
    <name evidence="1" type="synonym">cycJ</name>
    <name type="ordered locus">Pmen_2787</name>
</gene>
<sequence>MNPVRKKRLYIVLAILCGVSIAVALALTALQENINLFYTPSQIANGEAPEGTRIRAGGLVEEGSVKRSPDTLEVDFVVTDGAHGVTIRYHGILPDLFREGQGIVALGRVNEDGVLVADEVLAKHDENYMPPEVMQALEKSGMMQKHNEAKAAKGYQQESAQ</sequence>
<protein>
    <recommendedName>
        <fullName evidence="1">Cytochrome c-type biogenesis protein CcmE</fullName>
    </recommendedName>
    <alternativeName>
        <fullName evidence="1">Cytochrome c maturation protein E</fullName>
    </alternativeName>
    <alternativeName>
        <fullName evidence="1">Heme chaperone CcmE</fullName>
    </alternativeName>
</protein>
<dbReference type="EMBL" id="CP000680">
    <property type="protein sequence ID" value="ABP85542.1"/>
    <property type="molecule type" value="Genomic_DNA"/>
</dbReference>
<dbReference type="SMR" id="A4XW26"/>
<dbReference type="STRING" id="399739.Pmen_2787"/>
<dbReference type="KEGG" id="pmy:Pmen_2787"/>
<dbReference type="PATRIC" id="fig|399739.8.peg.2821"/>
<dbReference type="eggNOG" id="COG2332">
    <property type="taxonomic scope" value="Bacteria"/>
</dbReference>
<dbReference type="HOGENOM" id="CLU_079503_1_1_6"/>
<dbReference type="OrthoDB" id="9793584at2"/>
<dbReference type="GO" id="GO:0005886">
    <property type="term" value="C:plasma membrane"/>
    <property type="evidence" value="ECO:0007669"/>
    <property type="project" value="UniProtKB-SubCell"/>
</dbReference>
<dbReference type="GO" id="GO:0020037">
    <property type="term" value="F:heme binding"/>
    <property type="evidence" value="ECO:0007669"/>
    <property type="project" value="InterPro"/>
</dbReference>
<dbReference type="GO" id="GO:0046872">
    <property type="term" value="F:metal ion binding"/>
    <property type="evidence" value="ECO:0007669"/>
    <property type="project" value="UniProtKB-KW"/>
</dbReference>
<dbReference type="GO" id="GO:0017004">
    <property type="term" value="P:cytochrome complex assembly"/>
    <property type="evidence" value="ECO:0007669"/>
    <property type="project" value="UniProtKB-KW"/>
</dbReference>
<dbReference type="FunFam" id="2.40.50.140:FF:000104">
    <property type="entry name" value="Cytochrome c-type biogenesis protein CcmE"/>
    <property type="match status" value="1"/>
</dbReference>
<dbReference type="Gene3D" id="2.40.50.140">
    <property type="entry name" value="Nucleic acid-binding proteins"/>
    <property type="match status" value="1"/>
</dbReference>
<dbReference type="HAMAP" id="MF_01959">
    <property type="entry name" value="CcmE"/>
    <property type="match status" value="1"/>
</dbReference>
<dbReference type="InterPro" id="IPR004329">
    <property type="entry name" value="CcmE"/>
</dbReference>
<dbReference type="InterPro" id="IPR036127">
    <property type="entry name" value="CcmE-like_sf"/>
</dbReference>
<dbReference type="InterPro" id="IPR012340">
    <property type="entry name" value="NA-bd_OB-fold"/>
</dbReference>
<dbReference type="NCBIfam" id="NF009638">
    <property type="entry name" value="PRK13165.1"/>
    <property type="match status" value="1"/>
</dbReference>
<dbReference type="NCBIfam" id="NF009727">
    <property type="entry name" value="PRK13254.1-1"/>
    <property type="match status" value="1"/>
</dbReference>
<dbReference type="NCBIfam" id="NF009729">
    <property type="entry name" value="PRK13254.1-3"/>
    <property type="match status" value="1"/>
</dbReference>
<dbReference type="NCBIfam" id="NF009731">
    <property type="entry name" value="PRK13254.1-5"/>
    <property type="match status" value="1"/>
</dbReference>
<dbReference type="PANTHER" id="PTHR34128">
    <property type="entry name" value="CYTOCHROME C-TYPE BIOGENESIS PROTEIN CCME HOMOLOG, MITOCHONDRIAL"/>
    <property type="match status" value="1"/>
</dbReference>
<dbReference type="PANTHER" id="PTHR34128:SF2">
    <property type="entry name" value="CYTOCHROME C-TYPE BIOGENESIS PROTEIN CCME HOMOLOG, MITOCHONDRIAL"/>
    <property type="match status" value="1"/>
</dbReference>
<dbReference type="Pfam" id="PF03100">
    <property type="entry name" value="CcmE"/>
    <property type="match status" value="1"/>
</dbReference>
<dbReference type="SUPFAM" id="SSF82093">
    <property type="entry name" value="Heme chaperone CcmE"/>
    <property type="match status" value="1"/>
</dbReference>
<feature type="chain" id="PRO_1000070833" description="Cytochrome c-type biogenesis protein CcmE">
    <location>
        <begin position="1"/>
        <end position="161"/>
    </location>
</feature>
<feature type="topological domain" description="Cytoplasmic" evidence="1">
    <location>
        <begin position="1"/>
        <end position="8"/>
    </location>
</feature>
<feature type="transmembrane region" description="Helical; Signal-anchor for type II membrane protein" evidence="1">
    <location>
        <begin position="9"/>
        <end position="29"/>
    </location>
</feature>
<feature type="topological domain" description="Periplasmic" evidence="1">
    <location>
        <begin position="30"/>
        <end position="161"/>
    </location>
</feature>
<feature type="binding site" description="covalent" evidence="1">
    <location>
        <position position="124"/>
    </location>
    <ligand>
        <name>heme</name>
        <dbReference type="ChEBI" id="CHEBI:30413"/>
    </ligand>
</feature>
<feature type="binding site" description="axial binding residue" evidence="1">
    <location>
        <position position="128"/>
    </location>
    <ligand>
        <name>heme</name>
        <dbReference type="ChEBI" id="CHEBI:30413"/>
    </ligand>
    <ligandPart>
        <name>Fe</name>
        <dbReference type="ChEBI" id="CHEBI:18248"/>
    </ligandPart>
</feature>
<evidence type="ECO:0000255" key="1">
    <source>
        <dbReference type="HAMAP-Rule" id="MF_01959"/>
    </source>
</evidence>
<proteinExistence type="inferred from homology"/>
<comment type="function">
    <text evidence="1">Heme chaperone required for the biogenesis of c-type cytochromes. Transiently binds heme delivered by CcmC and transfers the heme to apo-cytochromes in a process facilitated by CcmF and CcmH.</text>
</comment>
<comment type="subcellular location">
    <subcellularLocation>
        <location evidence="1">Cell inner membrane</location>
        <topology evidence="1">Single-pass type II membrane protein</topology>
        <orientation evidence="1">Periplasmic side</orientation>
    </subcellularLocation>
</comment>
<comment type="similarity">
    <text evidence="1">Belongs to the CcmE/CycJ family.</text>
</comment>
<keyword id="KW-0997">Cell inner membrane</keyword>
<keyword id="KW-1003">Cell membrane</keyword>
<keyword id="KW-0201">Cytochrome c-type biogenesis</keyword>
<keyword id="KW-0349">Heme</keyword>
<keyword id="KW-0408">Iron</keyword>
<keyword id="KW-0472">Membrane</keyword>
<keyword id="KW-0479">Metal-binding</keyword>
<keyword id="KW-0735">Signal-anchor</keyword>
<keyword id="KW-0812">Transmembrane</keyword>
<keyword id="KW-1133">Transmembrane helix</keyword>
<name>CCME_ECTM1</name>
<accession>A4XW26</accession>
<organism>
    <name type="scientific">Ectopseudomonas mendocina (strain ymp)</name>
    <name type="common">Pseudomonas mendocina</name>
    <dbReference type="NCBI Taxonomy" id="399739"/>
    <lineage>
        <taxon>Bacteria</taxon>
        <taxon>Pseudomonadati</taxon>
        <taxon>Pseudomonadota</taxon>
        <taxon>Gammaproteobacteria</taxon>
        <taxon>Pseudomonadales</taxon>
        <taxon>Pseudomonadaceae</taxon>
        <taxon>Ectopseudomonas</taxon>
    </lineage>
</organism>
<reference key="1">
    <citation type="submission" date="2007-04" db="EMBL/GenBank/DDBJ databases">
        <title>Complete sequence of Pseudomonas mendocina ymp.</title>
        <authorList>
            <consortium name="US DOE Joint Genome Institute"/>
            <person name="Copeland A."/>
            <person name="Lucas S."/>
            <person name="Lapidus A."/>
            <person name="Barry K."/>
            <person name="Glavina del Rio T."/>
            <person name="Dalin E."/>
            <person name="Tice H."/>
            <person name="Pitluck S."/>
            <person name="Kiss H."/>
            <person name="Brettin T."/>
            <person name="Detter J.C."/>
            <person name="Bruce D."/>
            <person name="Han C."/>
            <person name="Schmutz J."/>
            <person name="Larimer F."/>
            <person name="Land M."/>
            <person name="Hauser L."/>
            <person name="Kyrpides N."/>
            <person name="Mikhailova N."/>
            <person name="Hersman L."/>
            <person name="Dubois J."/>
            <person name="Maurice P."/>
            <person name="Richardson P."/>
        </authorList>
    </citation>
    <scope>NUCLEOTIDE SEQUENCE [LARGE SCALE GENOMIC DNA]</scope>
    <source>
        <strain>ymp</strain>
    </source>
</reference>